<evidence type="ECO:0000255" key="1">
    <source>
        <dbReference type="HAMAP-Rule" id="MF_00500"/>
    </source>
</evidence>
<evidence type="ECO:0000305" key="2"/>
<feature type="chain" id="PRO_1000014592" description="Small ribosomal subunit protein bS20">
    <location>
        <begin position="1"/>
        <end position="89"/>
    </location>
</feature>
<keyword id="KW-0687">Ribonucleoprotein</keyword>
<keyword id="KW-0689">Ribosomal protein</keyword>
<keyword id="KW-0694">RNA-binding</keyword>
<keyword id="KW-0699">rRNA-binding</keyword>
<protein>
    <recommendedName>
        <fullName evidence="1">Small ribosomal subunit protein bS20</fullName>
    </recommendedName>
    <alternativeName>
        <fullName evidence="2">30S ribosomal protein S20</fullName>
    </alternativeName>
</protein>
<organism>
    <name type="scientific">Helicobacter acinonychis (strain Sheeba)</name>
    <dbReference type="NCBI Taxonomy" id="382638"/>
    <lineage>
        <taxon>Bacteria</taxon>
        <taxon>Pseudomonadati</taxon>
        <taxon>Campylobacterota</taxon>
        <taxon>Epsilonproteobacteria</taxon>
        <taxon>Campylobacterales</taxon>
        <taxon>Helicobacteraceae</taxon>
        <taxon>Helicobacter</taxon>
    </lineage>
</organism>
<comment type="function">
    <text evidence="1">Binds directly to 16S ribosomal RNA.</text>
</comment>
<comment type="similarity">
    <text evidence="1">Belongs to the bacterial ribosomal protein bS20 family.</text>
</comment>
<proteinExistence type="inferred from homology"/>
<name>RS20_HELAH</name>
<dbReference type="EMBL" id="AM260522">
    <property type="protein sequence ID" value="CAK00246.1"/>
    <property type="molecule type" value="Genomic_DNA"/>
</dbReference>
<dbReference type="RefSeq" id="WP_001273618.1">
    <property type="nucleotide sequence ID" value="NC_008229.1"/>
</dbReference>
<dbReference type="SMR" id="Q17VT0"/>
<dbReference type="STRING" id="382638.Hac_1528"/>
<dbReference type="GeneID" id="31758796"/>
<dbReference type="KEGG" id="hac:Hac_1528"/>
<dbReference type="eggNOG" id="COG0268">
    <property type="taxonomic scope" value="Bacteria"/>
</dbReference>
<dbReference type="HOGENOM" id="CLU_160655_3_0_7"/>
<dbReference type="OrthoDB" id="9807974at2"/>
<dbReference type="BioCyc" id="HACI382638:HAC_RS06475-MONOMER"/>
<dbReference type="Proteomes" id="UP000000775">
    <property type="component" value="Chromosome"/>
</dbReference>
<dbReference type="GO" id="GO:0005829">
    <property type="term" value="C:cytosol"/>
    <property type="evidence" value="ECO:0007669"/>
    <property type="project" value="TreeGrafter"/>
</dbReference>
<dbReference type="GO" id="GO:0015935">
    <property type="term" value="C:small ribosomal subunit"/>
    <property type="evidence" value="ECO:0007669"/>
    <property type="project" value="TreeGrafter"/>
</dbReference>
<dbReference type="GO" id="GO:0070181">
    <property type="term" value="F:small ribosomal subunit rRNA binding"/>
    <property type="evidence" value="ECO:0007669"/>
    <property type="project" value="TreeGrafter"/>
</dbReference>
<dbReference type="GO" id="GO:0003735">
    <property type="term" value="F:structural constituent of ribosome"/>
    <property type="evidence" value="ECO:0007669"/>
    <property type="project" value="InterPro"/>
</dbReference>
<dbReference type="GO" id="GO:0006412">
    <property type="term" value="P:translation"/>
    <property type="evidence" value="ECO:0007669"/>
    <property type="project" value="UniProtKB-UniRule"/>
</dbReference>
<dbReference type="FunFam" id="1.20.58.110:FF:000001">
    <property type="entry name" value="30S ribosomal protein S20"/>
    <property type="match status" value="1"/>
</dbReference>
<dbReference type="Gene3D" id="1.20.58.110">
    <property type="entry name" value="Ribosomal protein S20"/>
    <property type="match status" value="1"/>
</dbReference>
<dbReference type="HAMAP" id="MF_00500">
    <property type="entry name" value="Ribosomal_bS20"/>
    <property type="match status" value="1"/>
</dbReference>
<dbReference type="InterPro" id="IPR002583">
    <property type="entry name" value="Ribosomal_bS20"/>
</dbReference>
<dbReference type="InterPro" id="IPR036510">
    <property type="entry name" value="Ribosomal_bS20_sf"/>
</dbReference>
<dbReference type="NCBIfam" id="TIGR00029">
    <property type="entry name" value="S20"/>
    <property type="match status" value="1"/>
</dbReference>
<dbReference type="PANTHER" id="PTHR33398">
    <property type="entry name" value="30S RIBOSOMAL PROTEIN S20"/>
    <property type="match status" value="1"/>
</dbReference>
<dbReference type="PANTHER" id="PTHR33398:SF1">
    <property type="entry name" value="SMALL RIBOSOMAL SUBUNIT PROTEIN BS20C"/>
    <property type="match status" value="1"/>
</dbReference>
<dbReference type="Pfam" id="PF01649">
    <property type="entry name" value="Ribosomal_S20p"/>
    <property type="match status" value="1"/>
</dbReference>
<dbReference type="SUPFAM" id="SSF46992">
    <property type="entry name" value="Ribosomal protein S20"/>
    <property type="match status" value="1"/>
</dbReference>
<accession>Q17VT0</accession>
<sequence>MANHKSAEKRIRQTIKRTERNRFYKTKIKNIIKAVREAVAVNDVEKAQERLKIANKELHKFVSKGILKKNTASRKVSRLNASVKKIALA</sequence>
<reference key="1">
    <citation type="journal article" date="2006" name="PLoS Genet.">
        <title>Who ate whom? Adaptive Helicobacter genomic changes that accompanied a host jump from early humans to large felines.</title>
        <authorList>
            <person name="Eppinger M."/>
            <person name="Baar C."/>
            <person name="Linz B."/>
            <person name="Raddatz G."/>
            <person name="Lanz C."/>
            <person name="Keller H."/>
            <person name="Morelli G."/>
            <person name="Gressmann H."/>
            <person name="Achtman M."/>
            <person name="Schuster S.C."/>
        </authorList>
    </citation>
    <scope>NUCLEOTIDE SEQUENCE [LARGE SCALE GENOMIC DNA]</scope>
    <source>
        <strain>Sheeba</strain>
    </source>
</reference>
<gene>
    <name evidence="1" type="primary">rpsT</name>
    <name type="ordered locus">Hac_1528</name>
</gene>